<feature type="chain" id="PRO_1000098854" description="Protease HtpX homolog">
    <location>
        <begin position="1"/>
        <end position="299"/>
    </location>
</feature>
<feature type="transmembrane region" description="Helical" evidence="1">
    <location>
        <begin position="19"/>
        <end position="39"/>
    </location>
</feature>
<feature type="transmembrane region" description="Helical" evidence="1">
    <location>
        <begin position="41"/>
        <end position="61"/>
    </location>
</feature>
<feature type="transmembrane region" description="Helical" evidence="1">
    <location>
        <begin position="156"/>
        <end position="176"/>
    </location>
</feature>
<feature type="transmembrane region" description="Helical" evidence="1">
    <location>
        <begin position="198"/>
        <end position="218"/>
    </location>
</feature>
<feature type="active site" evidence="1">
    <location>
        <position position="147"/>
    </location>
</feature>
<feature type="binding site" evidence="1">
    <location>
        <position position="146"/>
    </location>
    <ligand>
        <name>Zn(2+)</name>
        <dbReference type="ChEBI" id="CHEBI:29105"/>
        <note>catalytic</note>
    </ligand>
</feature>
<feature type="binding site" evidence="1">
    <location>
        <position position="150"/>
    </location>
    <ligand>
        <name>Zn(2+)</name>
        <dbReference type="ChEBI" id="CHEBI:29105"/>
        <note>catalytic</note>
    </ligand>
</feature>
<feature type="binding site" evidence="1">
    <location>
        <position position="227"/>
    </location>
    <ligand>
        <name>Zn(2+)</name>
        <dbReference type="ChEBI" id="CHEBI:29105"/>
        <note>catalytic</note>
    </ligand>
</feature>
<comment type="cofactor">
    <cofactor evidence="1">
        <name>Zn(2+)</name>
        <dbReference type="ChEBI" id="CHEBI:29105"/>
    </cofactor>
    <text evidence="1">Binds 1 zinc ion per subunit.</text>
</comment>
<comment type="subcellular location">
    <subcellularLocation>
        <location evidence="1">Cell membrane</location>
        <topology evidence="1">Multi-pass membrane protein</topology>
    </subcellularLocation>
</comment>
<comment type="similarity">
    <text evidence="1">Belongs to the peptidase M48B family.</text>
</comment>
<evidence type="ECO:0000255" key="1">
    <source>
        <dbReference type="HAMAP-Rule" id="MF_00188"/>
    </source>
</evidence>
<keyword id="KW-1003">Cell membrane</keyword>
<keyword id="KW-0378">Hydrolase</keyword>
<keyword id="KW-0472">Membrane</keyword>
<keyword id="KW-0479">Metal-binding</keyword>
<keyword id="KW-0482">Metalloprotease</keyword>
<keyword id="KW-0645">Protease</keyword>
<keyword id="KW-1185">Reference proteome</keyword>
<keyword id="KW-0812">Transmembrane</keyword>
<keyword id="KW-1133">Transmembrane helix</keyword>
<keyword id="KW-0862">Zinc</keyword>
<gene>
    <name evidence="1" type="primary">htpX</name>
    <name type="ordered locus">Teth39_1578</name>
</gene>
<protein>
    <recommendedName>
        <fullName evidence="1">Protease HtpX homolog</fullName>
        <ecNumber evidence="1">3.4.24.-</ecNumber>
    </recommendedName>
</protein>
<reference key="1">
    <citation type="submission" date="2008-01" db="EMBL/GenBank/DDBJ databases">
        <title>Complete sequence of Thermoanaerobacter pseudethanolicus 39E.</title>
        <authorList>
            <person name="Copeland A."/>
            <person name="Lucas S."/>
            <person name="Lapidus A."/>
            <person name="Barry K."/>
            <person name="Glavina del Rio T."/>
            <person name="Dalin E."/>
            <person name="Tice H."/>
            <person name="Pitluck S."/>
            <person name="Bruce D."/>
            <person name="Goodwin L."/>
            <person name="Saunders E."/>
            <person name="Brettin T."/>
            <person name="Detter J.C."/>
            <person name="Han C."/>
            <person name="Schmutz J."/>
            <person name="Larimer F."/>
            <person name="Land M."/>
            <person name="Hauser L."/>
            <person name="Kyrpides N."/>
            <person name="Lykidis A."/>
            <person name="Hemme C."/>
            <person name="Fields M.W."/>
            <person name="He Z."/>
            <person name="Zhou J."/>
            <person name="Richardson P."/>
        </authorList>
    </citation>
    <scope>NUCLEOTIDE SEQUENCE [LARGE SCALE GENOMIC DNA]</scope>
    <source>
        <strain>ATCC 33223 / DSM 2355 / 39E</strain>
    </source>
</reference>
<organism>
    <name type="scientific">Thermoanaerobacter pseudethanolicus (strain ATCC 33223 / 39E)</name>
    <name type="common">Clostridium thermohydrosulfuricum</name>
    <dbReference type="NCBI Taxonomy" id="340099"/>
    <lineage>
        <taxon>Bacteria</taxon>
        <taxon>Bacillati</taxon>
        <taxon>Bacillota</taxon>
        <taxon>Clostridia</taxon>
        <taxon>Thermoanaerobacterales</taxon>
        <taxon>Thermoanaerobacteraceae</taxon>
        <taxon>Thermoanaerobacter</taxon>
    </lineage>
</organism>
<sequence>MSRKTLYELQAENVRKTYLFIVTFSLILFAIGYFFVWYFNWGLTGIVLLAIFIVLYNWIAYEQSDKIALASVGAIPANPEEYYVLHNIVEEVALAAGIPKPNVYIMEESQPNAFATGKDPKHASVCVTTGLLQMMNREELQGVIAHEISHIRNRDILLMTVVAVVAGLIILLRDVMLRSMWWGMGESRRRDKNDNGAIILLIIGLIFSIIAPLIVLIIRSAISRQREYLADATGAFIVRDPYGLASALEKIGSYTRPMRVTSDATAHLFISNPFGRAEKLFATHPPIEERIKRLKSLTM</sequence>
<dbReference type="EC" id="3.4.24.-" evidence="1"/>
<dbReference type="EMBL" id="CP000924">
    <property type="protein sequence ID" value="ABY95222.1"/>
    <property type="molecule type" value="Genomic_DNA"/>
</dbReference>
<dbReference type="RefSeq" id="WP_012269489.1">
    <property type="nucleotide sequence ID" value="NC_010321.1"/>
</dbReference>
<dbReference type="SMR" id="B0KB34"/>
<dbReference type="STRING" id="340099.Teth39_1578"/>
<dbReference type="KEGG" id="tpd:Teth39_1578"/>
<dbReference type="eggNOG" id="COG0501">
    <property type="taxonomic scope" value="Bacteria"/>
</dbReference>
<dbReference type="HOGENOM" id="CLU_042266_3_0_9"/>
<dbReference type="Proteomes" id="UP000002156">
    <property type="component" value="Chromosome"/>
</dbReference>
<dbReference type="GO" id="GO:0005886">
    <property type="term" value="C:plasma membrane"/>
    <property type="evidence" value="ECO:0007669"/>
    <property type="project" value="UniProtKB-SubCell"/>
</dbReference>
<dbReference type="GO" id="GO:0004222">
    <property type="term" value="F:metalloendopeptidase activity"/>
    <property type="evidence" value="ECO:0007669"/>
    <property type="project" value="UniProtKB-UniRule"/>
</dbReference>
<dbReference type="GO" id="GO:0008270">
    <property type="term" value="F:zinc ion binding"/>
    <property type="evidence" value="ECO:0007669"/>
    <property type="project" value="UniProtKB-UniRule"/>
</dbReference>
<dbReference type="GO" id="GO:0006508">
    <property type="term" value="P:proteolysis"/>
    <property type="evidence" value="ECO:0007669"/>
    <property type="project" value="UniProtKB-KW"/>
</dbReference>
<dbReference type="CDD" id="cd07340">
    <property type="entry name" value="M48B_Htpx_like"/>
    <property type="match status" value="1"/>
</dbReference>
<dbReference type="Gene3D" id="3.30.2010.10">
    <property type="entry name" value="Metalloproteases ('zincins'), catalytic domain"/>
    <property type="match status" value="1"/>
</dbReference>
<dbReference type="HAMAP" id="MF_00188">
    <property type="entry name" value="Pept_M48_protease_HtpX"/>
    <property type="match status" value="1"/>
</dbReference>
<dbReference type="InterPro" id="IPR050083">
    <property type="entry name" value="HtpX_protease"/>
</dbReference>
<dbReference type="InterPro" id="IPR022919">
    <property type="entry name" value="Pept_M48_protease_HtpX"/>
</dbReference>
<dbReference type="InterPro" id="IPR001915">
    <property type="entry name" value="Peptidase_M48"/>
</dbReference>
<dbReference type="NCBIfam" id="NF003425">
    <property type="entry name" value="PRK04897.1"/>
    <property type="match status" value="1"/>
</dbReference>
<dbReference type="PANTHER" id="PTHR43221">
    <property type="entry name" value="PROTEASE HTPX"/>
    <property type="match status" value="1"/>
</dbReference>
<dbReference type="PANTHER" id="PTHR43221:SF1">
    <property type="entry name" value="PROTEASE HTPX"/>
    <property type="match status" value="1"/>
</dbReference>
<dbReference type="Pfam" id="PF01435">
    <property type="entry name" value="Peptidase_M48"/>
    <property type="match status" value="1"/>
</dbReference>
<name>HTPX_THEP3</name>
<proteinExistence type="inferred from homology"/>
<accession>B0KB34</accession>